<keyword id="KW-0963">Cytoplasm</keyword>
<keyword id="KW-0413">Isomerase</keyword>
<keyword id="KW-1185">Reference proteome</keyword>
<keyword id="KW-0697">Rotamase</keyword>
<feature type="chain" id="PRO_0000226118" description="Serine/threonine-protein phosphatase 2A activator 2">
    <location>
        <begin position="1"/>
        <end position="457"/>
    </location>
</feature>
<feature type="region of interest" description="Disordered" evidence="2">
    <location>
        <begin position="387"/>
        <end position="407"/>
    </location>
</feature>
<feature type="region of interest" description="Disordered" evidence="2">
    <location>
        <begin position="426"/>
        <end position="457"/>
    </location>
</feature>
<feature type="compositionally biased region" description="Basic residues" evidence="2">
    <location>
        <begin position="391"/>
        <end position="400"/>
    </location>
</feature>
<sequence length="457" mass="51009">MPPAALQATVSESVKDAIISKLRQPPSAVPSREWSAETRTSLTPADAGIAEARASAEDIELVDLQHHNFSEPRKRIVSPASLSRFEHSQAFAEILAFICVCNTRVVGKTLTEEIQISSACRTILEMLDQVAALRESTPPDASIGSSRFGNPAFRTFYAKIRENTDRLHRMIPGLETDSEWSRAARAELSVYFQECWGNEKRIDYGSGMELNMACWLLCLCKLRILRLPEDGACIVLRIFWTYVQVMRDIQSSYWLEPAGSHGVWGLDDYHFLPFLWGAGQLSSHRHLRPKAIHDAEIVDEFAPKYMYLACIQFINSVKTASLRWHSPMLDDISGAKSWSKVNQGMIKMYRAEVLKKLPIAQHIFFGSLLRFPEPATGELEEEDVEEDAHGHIHPAGKPHAHGTGEGQAAGWGDCCGIPIPSAFAAAEQEKKRQQGNFSSTMLGEKPFGTGVRRIPFD</sequence>
<protein>
    <recommendedName>
        <fullName>Serine/threonine-protein phosphatase 2A activator 2</fullName>
        <ecNumber>5.2.1.8</ecNumber>
    </recommendedName>
    <alternativeName>
        <fullName>Peptidyl-prolyl cis-trans isomerase PTPA-2</fullName>
        <shortName>PPIase PTPA-2</shortName>
        <shortName>Rotamase PTPA-2</shortName>
    </alternativeName>
    <alternativeName>
        <fullName>Phosphotyrosyl phosphatase activator 2</fullName>
    </alternativeName>
</protein>
<name>PTPA2_MYCMD</name>
<accession>Q4PCR0</accession>
<accession>A0A0D1C800</accession>
<evidence type="ECO:0000250" key="1"/>
<evidence type="ECO:0000256" key="2">
    <source>
        <dbReference type="SAM" id="MobiDB-lite"/>
    </source>
</evidence>
<evidence type="ECO:0000305" key="3"/>
<dbReference type="EC" id="5.2.1.8"/>
<dbReference type="EMBL" id="CM003144">
    <property type="protein sequence ID" value="KIS69567.1"/>
    <property type="molecule type" value="Genomic_DNA"/>
</dbReference>
<dbReference type="RefSeq" id="XP_011388468.1">
    <property type="nucleotide sequence ID" value="XM_011390166.1"/>
</dbReference>
<dbReference type="SMR" id="Q4PCR0"/>
<dbReference type="FunCoup" id="Q4PCR0">
    <property type="interactions" value="51"/>
</dbReference>
<dbReference type="STRING" id="237631.Q4PCR0"/>
<dbReference type="EnsemblFungi" id="KIS69567">
    <property type="protein sequence ID" value="KIS69567"/>
    <property type="gene ID" value="UMAG_02103"/>
</dbReference>
<dbReference type="GeneID" id="23562927"/>
<dbReference type="KEGG" id="uma:UMAG_02103"/>
<dbReference type="VEuPathDB" id="FungiDB:UMAG_02103"/>
<dbReference type="eggNOG" id="KOG2867">
    <property type="taxonomic scope" value="Eukaryota"/>
</dbReference>
<dbReference type="HOGENOM" id="CLU_030733_0_0_1"/>
<dbReference type="InParanoid" id="Q4PCR0"/>
<dbReference type="OMA" id="KNWYKVE"/>
<dbReference type="OrthoDB" id="16120at2759"/>
<dbReference type="Proteomes" id="UP000000561">
    <property type="component" value="Chromosome 5"/>
</dbReference>
<dbReference type="GO" id="GO:0005737">
    <property type="term" value="C:cytoplasm"/>
    <property type="evidence" value="ECO:0000318"/>
    <property type="project" value="GO_Central"/>
</dbReference>
<dbReference type="GO" id="GO:0005634">
    <property type="term" value="C:nucleus"/>
    <property type="evidence" value="ECO:0000318"/>
    <property type="project" value="GO_Central"/>
</dbReference>
<dbReference type="GO" id="GO:0000159">
    <property type="term" value="C:protein phosphatase type 2A complex"/>
    <property type="evidence" value="ECO:0000318"/>
    <property type="project" value="GO_Central"/>
</dbReference>
<dbReference type="GO" id="GO:0003755">
    <property type="term" value="F:peptidyl-prolyl cis-trans isomerase activity"/>
    <property type="evidence" value="ECO:0000318"/>
    <property type="project" value="GO_Central"/>
</dbReference>
<dbReference type="GO" id="GO:0008160">
    <property type="term" value="F:protein tyrosine phosphatase activator activity"/>
    <property type="evidence" value="ECO:0000318"/>
    <property type="project" value="GO_Central"/>
</dbReference>
<dbReference type="GO" id="GO:0007052">
    <property type="term" value="P:mitotic spindle organization"/>
    <property type="evidence" value="ECO:0000318"/>
    <property type="project" value="GO_Central"/>
</dbReference>
<dbReference type="GO" id="GO:0006970">
    <property type="term" value="P:response to osmotic stress"/>
    <property type="evidence" value="ECO:0007669"/>
    <property type="project" value="EnsemblFungi"/>
</dbReference>
<dbReference type="CDD" id="cd04087">
    <property type="entry name" value="PTPA"/>
    <property type="match status" value="1"/>
</dbReference>
<dbReference type="FunFam" id="1.20.120.1150:FF:000002">
    <property type="entry name" value="Serine/threonine-protein phosphatase 2A activator"/>
    <property type="match status" value="1"/>
</dbReference>
<dbReference type="Gene3D" id="1.20.120.1150">
    <property type="match status" value="1"/>
</dbReference>
<dbReference type="InterPro" id="IPR004327">
    <property type="entry name" value="Phstyr_phstse_ac"/>
</dbReference>
<dbReference type="InterPro" id="IPR043170">
    <property type="entry name" value="PTPA_C_lid"/>
</dbReference>
<dbReference type="InterPro" id="IPR037218">
    <property type="entry name" value="PTPA_sf"/>
</dbReference>
<dbReference type="PANTHER" id="PTHR10012">
    <property type="entry name" value="SERINE/THREONINE-PROTEIN PHOSPHATASE 2A REGULATORY SUBUNIT B"/>
    <property type="match status" value="1"/>
</dbReference>
<dbReference type="PANTHER" id="PTHR10012:SF5">
    <property type="entry name" value="SERINE_THREONINE-PROTEIN PHOSPHATASE 2A ACTIVATOR 2"/>
    <property type="match status" value="1"/>
</dbReference>
<dbReference type="Pfam" id="PF03095">
    <property type="entry name" value="PTPA"/>
    <property type="match status" value="1"/>
</dbReference>
<dbReference type="PIRSF" id="PIRSF016325">
    <property type="entry name" value="Phstyr_phstse_ac"/>
    <property type="match status" value="1"/>
</dbReference>
<dbReference type="SUPFAM" id="SSF140984">
    <property type="entry name" value="PTPA-like"/>
    <property type="match status" value="1"/>
</dbReference>
<comment type="function">
    <text evidence="1">PPIases accelerate the folding of proteins. It catalyzes the cis-trans isomerization of proline imidic peptide bonds in oligopeptides. Acts as a regulatory subunit for PP2A-like phosphatases modulating their activity or substrate specificity, probably by inducing a conformational change in the catalytic subunit, a direct target of the PPIase. Can reactivate inactive phosphatase PP2A-phosphatase methylesterase complexes (PP2Ai) in presence of ATP and Mg(2+) by dissociating the inactive form from the complex (By similarity).</text>
</comment>
<comment type="catalytic activity">
    <reaction>
        <text>[protein]-peptidylproline (omega=180) = [protein]-peptidylproline (omega=0)</text>
        <dbReference type="Rhea" id="RHEA:16237"/>
        <dbReference type="Rhea" id="RHEA-COMP:10747"/>
        <dbReference type="Rhea" id="RHEA-COMP:10748"/>
        <dbReference type="ChEBI" id="CHEBI:83833"/>
        <dbReference type="ChEBI" id="CHEBI:83834"/>
        <dbReference type="EC" id="5.2.1.8"/>
    </reaction>
</comment>
<comment type="subcellular location">
    <subcellularLocation>
        <location evidence="1">Cytoplasm</location>
    </subcellularLocation>
</comment>
<comment type="similarity">
    <text evidence="3">Belongs to the PTPA-type PPIase family.</text>
</comment>
<reference key="1">
    <citation type="journal article" date="2006" name="Nature">
        <title>Insights from the genome of the biotrophic fungal plant pathogen Ustilago maydis.</title>
        <authorList>
            <person name="Kaemper J."/>
            <person name="Kahmann R."/>
            <person name="Boelker M."/>
            <person name="Ma L.-J."/>
            <person name="Brefort T."/>
            <person name="Saville B.J."/>
            <person name="Banuett F."/>
            <person name="Kronstad J.W."/>
            <person name="Gold S.E."/>
            <person name="Mueller O."/>
            <person name="Perlin M.H."/>
            <person name="Woesten H.A.B."/>
            <person name="de Vries R."/>
            <person name="Ruiz-Herrera J."/>
            <person name="Reynaga-Pena C.G."/>
            <person name="Snetselaar K."/>
            <person name="McCann M."/>
            <person name="Perez-Martin J."/>
            <person name="Feldbruegge M."/>
            <person name="Basse C.W."/>
            <person name="Steinberg G."/>
            <person name="Ibeas J.I."/>
            <person name="Holloman W."/>
            <person name="Guzman P."/>
            <person name="Farman M.L."/>
            <person name="Stajich J.E."/>
            <person name="Sentandreu R."/>
            <person name="Gonzalez-Prieto J.M."/>
            <person name="Kennell J.C."/>
            <person name="Molina L."/>
            <person name="Schirawski J."/>
            <person name="Mendoza-Mendoza A."/>
            <person name="Greilinger D."/>
            <person name="Muench K."/>
            <person name="Roessel N."/>
            <person name="Scherer M."/>
            <person name="Vranes M."/>
            <person name="Ladendorf O."/>
            <person name="Vincon V."/>
            <person name="Fuchs U."/>
            <person name="Sandrock B."/>
            <person name="Meng S."/>
            <person name="Ho E.C.H."/>
            <person name="Cahill M.J."/>
            <person name="Boyce K.J."/>
            <person name="Klose J."/>
            <person name="Klosterman S.J."/>
            <person name="Deelstra H.J."/>
            <person name="Ortiz-Castellanos L."/>
            <person name="Li W."/>
            <person name="Sanchez-Alonso P."/>
            <person name="Schreier P.H."/>
            <person name="Haeuser-Hahn I."/>
            <person name="Vaupel M."/>
            <person name="Koopmann E."/>
            <person name="Friedrich G."/>
            <person name="Voss H."/>
            <person name="Schlueter T."/>
            <person name="Margolis J."/>
            <person name="Platt D."/>
            <person name="Swimmer C."/>
            <person name="Gnirke A."/>
            <person name="Chen F."/>
            <person name="Vysotskaia V."/>
            <person name="Mannhaupt G."/>
            <person name="Gueldener U."/>
            <person name="Muensterkoetter M."/>
            <person name="Haase D."/>
            <person name="Oesterheld M."/>
            <person name="Mewes H.-W."/>
            <person name="Mauceli E.W."/>
            <person name="DeCaprio D."/>
            <person name="Wade C.M."/>
            <person name="Butler J."/>
            <person name="Young S.K."/>
            <person name="Jaffe D.B."/>
            <person name="Calvo S.E."/>
            <person name="Nusbaum C."/>
            <person name="Galagan J.E."/>
            <person name="Birren B.W."/>
        </authorList>
    </citation>
    <scope>NUCLEOTIDE SEQUENCE [LARGE SCALE GENOMIC DNA]</scope>
    <source>
        <strain>DSM 14603 / FGSC 9021 / UM521</strain>
    </source>
</reference>
<reference key="2">
    <citation type="submission" date="2014-09" db="EMBL/GenBank/DDBJ databases">
        <authorList>
            <person name="Gueldener U."/>
            <person name="Muensterkoetter M."/>
            <person name="Walter M.C."/>
            <person name="Mannhaupt G."/>
            <person name="Kahmann R."/>
        </authorList>
    </citation>
    <scope>GENOME REANNOTATION</scope>
    <source>
        <strain>DSM 14603 / FGSC 9021 / UM521</strain>
    </source>
</reference>
<organism>
    <name type="scientific">Mycosarcoma maydis</name>
    <name type="common">Corn smut fungus</name>
    <name type="synonym">Ustilago maydis</name>
    <dbReference type="NCBI Taxonomy" id="5270"/>
    <lineage>
        <taxon>Eukaryota</taxon>
        <taxon>Fungi</taxon>
        <taxon>Dikarya</taxon>
        <taxon>Basidiomycota</taxon>
        <taxon>Ustilaginomycotina</taxon>
        <taxon>Ustilaginomycetes</taxon>
        <taxon>Ustilaginales</taxon>
        <taxon>Ustilaginaceae</taxon>
        <taxon>Mycosarcoma</taxon>
    </lineage>
</organism>
<gene>
    <name type="primary">RRD2</name>
    <name type="ORF">UMAG_02103</name>
</gene>
<proteinExistence type="inferred from homology"/>